<reference key="1">
    <citation type="journal article" date="2001" name="Proc. Natl. Acad. Sci. U.S.A.">
        <title>Complete genomic sequence of Pasteurella multocida Pm70.</title>
        <authorList>
            <person name="May B.J."/>
            <person name="Zhang Q."/>
            <person name="Li L.L."/>
            <person name="Paustian M.L."/>
            <person name="Whittam T.S."/>
            <person name="Kapur V."/>
        </authorList>
    </citation>
    <scope>NUCLEOTIDE SEQUENCE [LARGE SCALE GENOMIC DNA]</scope>
    <source>
        <strain>Pm70</strain>
    </source>
</reference>
<feature type="chain" id="PRO_0000388914" description="UPF0756 membrane protein PM0771">
    <location>
        <begin position="1"/>
        <end position="150"/>
    </location>
</feature>
<feature type="transmembrane region" description="Helical" evidence="1">
    <location>
        <begin position="12"/>
        <end position="34"/>
    </location>
</feature>
<feature type="transmembrane region" description="Helical" evidence="1">
    <location>
        <begin position="52"/>
        <end position="72"/>
    </location>
</feature>
<feature type="transmembrane region" description="Helical" evidence="1">
    <location>
        <begin position="79"/>
        <end position="99"/>
    </location>
</feature>
<feature type="transmembrane region" description="Helical" evidence="1">
    <location>
        <begin position="123"/>
        <end position="143"/>
    </location>
</feature>
<dbReference type="EMBL" id="AE004439">
    <property type="protein sequence ID" value="AAK02855.1"/>
    <property type="molecule type" value="Genomic_DNA"/>
</dbReference>
<dbReference type="RefSeq" id="WP_005716569.1">
    <property type="nucleotide sequence ID" value="NC_002663.1"/>
</dbReference>
<dbReference type="STRING" id="272843.PM0771"/>
<dbReference type="EnsemblBacteria" id="AAK02855">
    <property type="protein sequence ID" value="AAK02855"/>
    <property type="gene ID" value="PM0771"/>
</dbReference>
<dbReference type="KEGG" id="pmu:PM0771"/>
<dbReference type="HOGENOM" id="CLU_125889_0_0_6"/>
<dbReference type="Proteomes" id="UP000000809">
    <property type="component" value="Chromosome"/>
</dbReference>
<dbReference type="GO" id="GO:0005886">
    <property type="term" value="C:plasma membrane"/>
    <property type="evidence" value="ECO:0007669"/>
    <property type="project" value="UniProtKB-SubCell"/>
</dbReference>
<dbReference type="HAMAP" id="MF_01874">
    <property type="entry name" value="UPF0756"/>
    <property type="match status" value="1"/>
</dbReference>
<dbReference type="InterPro" id="IPR007382">
    <property type="entry name" value="UPF0756_TM"/>
</dbReference>
<dbReference type="PANTHER" id="PTHR38452">
    <property type="entry name" value="UPF0756 MEMBRANE PROTEIN YEAL"/>
    <property type="match status" value="1"/>
</dbReference>
<dbReference type="PANTHER" id="PTHR38452:SF1">
    <property type="entry name" value="UPF0756 MEMBRANE PROTEIN YEAL"/>
    <property type="match status" value="1"/>
</dbReference>
<dbReference type="Pfam" id="PF04284">
    <property type="entry name" value="DUF441"/>
    <property type="match status" value="1"/>
</dbReference>
<evidence type="ECO:0000255" key="1">
    <source>
        <dbReference type="HAMAP-Rule" id="MF_01874"/>
    </source>
</evidence>
<comment type="subcellular location">
    <subcellularLocation>
        <location evidence="1">Cell membrane</location>
        <topology evidence="1">Multi-pass membrane protein</topology>
    </subcellularLocation>
</comment>
<comment type="similarity">
    <text evidence="1">Belongs to the UPF0756 family.</text>
</comment>
<sequence>MSLQFNTVALLLVVLILLGVLSNNSSVTISAAILLLMQQTFLAKYIPFMEKHGITLGIIILTIGVLSPIVSGKIQLPHLAVFLNWKMWLAVAVGLLVAWLGGRGVGLMGAQPVLLTGLLVGTILGVAFVGGIPVGPLIAAGILSLFLGKS</sequence>
<organism>
    <name type="scientific">Pasteurella multocida (strain Pm70)</name>
    <dbReference type="NCBI Taxonomy" id="272843"/>
    <lineage>
        <taxon>Bacteria</taxon>
        <taxon>Pseudomonadati</taxon>
        <taxon>Pseudomonadota</taxon>
        <taxon>Gammaproteobacteria</taxon>
        <taxon>Pasteurellales</taxon>
        <taxon>Pasteurellaceae</taxon>
        <taxon>Pasteurella</taxon>
    </lineage>
</organism>
<keyword id="KW-1003">Cell membrane</keyword>
<keyword id="KW-0472">Membrane</keyword>
<keyword id="KW-1185">Reference proteome</keyword>
<keyword id="KW-0812">Transmembrane</keyword>
<keyword id="KW-1133">Transmembrane helix</keyword>
<protein>
    <recommendedName>
        <fullName evidence="1">UPF0756 membrane protein PM0771</fullName>
    </recommendedName>
</protein>
<accession>Q9CMP4</accession>
<proteinExistence type="inferred from homology"/>
<gene>
    <name type="ordered locus">PM0771</name>
</gene>
<name>Y771_PASMU</name>